<name>OAS2_MOUSE</name>
<feature type="initiator methionine" description="Removed" evidence="2">
    <location>
        <position position="1"/>
    </location>
</feature>
<feature type="chain" id="PRO_0000418628" description="2'-5'-oligoadenylate synthase 2">
    <location>
        <begin position="2"/>
        <end position="742"/>
    </location>
</feature>
<feature type="region of interest" description="Disordered" evidence="4">
    <location>
        <begin position="1"/>
        <end position="35"/>
    </location>
</feature>
<feature type="region of interest" description="OAS domain 1">
    <location>
        <begin position="60"/>
        <end position="374"/>
    </location>
</feature>
<feature type="region of interest" description="OAS domain 2">
    <location>
        <begin position="382"/>
        <end position="721"/>
    </location>
</feature>
<feature type="compositionally biased region" description="Low complexity" evidence="4">
    <location>
        <begin position="10"/>
        <end position="21"/>
    </location>
</feature>
<feature type="binding site" evidence="1">
    <location>
        <position position="436"/>
    </location>
    <ligand>
        <name>ATP</name>
        <dbReference type="ChEBI" id="CHEBI:30616"/>
    </ligand>
</feature>
<feature type="binding site" evidence="3">
    <location>
        <position position="448"/>
    </location>
    <ligand>
        <name>Mg(2+)</name>
        <dbReference type="ChEBI" id="CHEBI:18420"/>
        <note>catalytic</note>
    </ligand>
</feature>
<feature type="binding site" evidence="3">
    <location>
        <position position="450"/>
    </location>
    <ligand>
        <name>Mg(2+)</name>
        <dbReference type="ChEBI" id="CHEBI:18420"/>
        <note>catalytic</note>
    </ligand>
</feature>
<feature type="binding site" evidence="3">
    <location>
        <position position="519"/>
    </location>
    <ligand>
        <name>Mg(2+)</name>
        <dbReference type="ChEBI" id="CHEBI:18420"/>
        <note>catalytic</note>
    </ligand>
</feature>
<feature type="binding site" evidence="1">
    <location>
        <position position="582"/>
    </location>
    <ligand>
        <name>ATP</name>
        <dbReference type="ChEBI" id="CHEBI:30616"/>
    </ligand>
</feature>
<feature type="binding site" evidence="1">
    <location>
        <position position="585"/>
    </location>
    <ligand>
        <name>ATP</name>
        <dbReference type="ChEBI" id="CHEBI:30616"/>
    </ligand>
</feature>
<feature type="modified residue" description="N6-acetyllysine" evidence="2">
    <location>
        <position position="417"/>
    </location>
</feature>
<feature type="lipid moiety-binding region" description="N-myristoyl glycine" evidence="2">
    <location>
        <position position="2"/>
    </location>
</feature>
<feature type="splice variant" id="VSP_044068" description="In isoform 2." evidence="10">
    <original>MQTPGSCGGQIYPTVGGVTK</original>
    <variation>PRDLKTSDMVGVFTTGGILWQDQGFLSFV</variation>
    <location>
        <begin position="723"/>
        <end position="742"/>
    </location>
</feature>
<feature type="sequence variant" description="In strain: C3H/He." evidence="5 9">
    <original>Q</original>
    <variation>R</variation>
    <location>
        <position position="232"/>
    </location>
</feature>
<feature type="mutagenesis site" description="Mice display postpartum failure of lactation and strongly reduced milk protein synthesis. Otherwise, mice develop normally and mammary glands are normal. The mutation causes an activation of the OAS2 pathway, characterized by a strong increase of Ribonuclease L (RNASEL) activity." evidence="8">
    <original>I</original>
    <variation>N</variation>
    <location>
        <position position="405"/>
    </location>
</feature>
<feature type="mutagenesis site" description="Strongly reduced 2'-5'-oligoadenylate synthase activity." evidence="7">
    <original>K</original>
    <variation>A</variation>
    <variation>G</variation>
    <location>
        <position position="444"/>
    </location>
</feature>
<feature type="mutagenesis site" description="Abolished 2'-5'-oligoadenylate synthase activity." evidence="7">
    <original>S</original>
    <variation>L</variation>
    <location>
        <position position="509"/>
    </location>
</feature>
<feature type="mutagenesis site" description="Strongly reduced 2'-5'-oligoadenylate synthase activity." evidence="7">
    <original>P</original>
    <variation>L</variation>
    <location>
        <position position="538"/>
    </location>
</feature>
<feature type="sequence conflict" description="In Ref. 1; BAB84135." evidence="13" ref="1">
    <original>Y</original>
    <variation>C</variation>
    <location>
        <position position="270"/>
    </location>
</feature>
<feature type="sequence conflict" description="In Ref. 1; BAB84135." evidence="13" ref="1">
    <original>F</original>
    <variation>L</variation>
    <location>
        <position position="630"/>
    </location>
</feature>
<reference key="1">
    <citation type="journal article" date="2002" name="J. Interferon Cytokine Res.">
        <title>Genomic structure of the mouse 2',5'-oligoadenylate synthetase gene family.</title>
        <authorList>
            <person name="Kakuta S."/>
            <person name="Shibata S."/>
            <person name="Iwakura Y."/>
        </authorList>
    </citation>
    <scope>NUCLEOTIDE SEQUENCE [MRNA] (ISOFORM 1)</scope>
    <scope>FUNCTION</scope>
    <scope>TISSUE SPECIFICITY</scope>
    <source>
        <strain>C57BL/6J</strain>
        <tissue>Colon</tissue>
    </source>
</reference>
<reference key="2">
    <citation type="journal article" date="2002" name="Proc. Natl. Acad. Sci. U.S.A.">
        <title>Positional cloning of the murine flavivirus resistance gene.</title>
        <authorList>
            <person name="Perelygin A.A."/>
            <person name="Scherbik S.V."/>
            <person name="Zhulin I.B."/>
            <person name="Stockman B.M."/>
            <person name="Li Y."/>
            <person name="Brinton M.A."/>
        </authorList>
    </citation>
    <scope>NUCLEOTIDE SEQUENCE [MRNA] (ISOFORM 2)</scope>
    <scope>VARIANT ARG-232</scope>
    <source>
        <strain>C3H/He</strain>
    </source>
</reference>
<reference key="3">
    <citation type="journal article" date="2009" name="PLoS Biol.">
        <title>Lineage-specific biology revealed by a finished genome assembly of the mouse.</title>
        <authorList>
            <person name="Church D.M."/>
            <person name="Goodstadt L."/>
            <person name="Hillier L.W."/>
            <person name="Zody M.C."/>
            <person name="Goldstein S."/>
            <person name="She X."/>
            <person name="Bult C.J."/>
            <person name="Agarwala R."/>
            <person name="Cherry J.L."/>
            <person name="DiCuccio M."/>
            <person name="Hlavina W."/>
            <person name="Kapustin Y."/>
            <person name="Meric P."/>
            <person name="Maglott D."/>
            <person name="Birtle Z."/>
            <person name="Marques A.C."/>
            <person name="Graves T."/>
            <person name="Zhou S."/>
            <person name="Teague B."/>
            <person name="Potamousis K."/>
            <person name="Churas C."/>
            <person name="Place M."/>
            <person name="Herschleb J."/>
            <person name="Runnheim R."/>
            <person name="Forrest D."/>
            <person name="Amos-Landgraf J."/>
            <person name="Schwartz D.C."/>
            <person name="Cheng Z."/>
            <person name="Lindblad-Toh K."/>
            <person name="Eichler E.E."/>
            <person name="Ponting C.P."/>
        </authorList>
    </citation>
    <scope>NUCLEOTIDE SEQUENCE [LARGE SCALE GENOMIC DNA]</scope>
    <source>
        <strain>C57BL/6J</strain>
    </source>
</reference>
<reference key="4">
    <citation type="submission" date="2005-09" db="EMBL/GenBank/DDBJ databases">
        <authorList>
            <person name="Mural R.J."/>
            <person name="Adams M.D."/>
            <person name="Myers E.W."/>
            <person name="Smith H.O."/>
            <person name="Venter J.C."/>
        </authorList>
    </citation>
    <scope>NUCLEOTIDE SEQUENCE [LARGE SCALE GENOMIC DNA]</scope>
    <scope>VARIANT ARG-232</scope>
</reference>
<reference key="5">
    <citation type="journal article" date="2006" name="J. Mol. Evol.">
        <title>The mammalian 2'-5' oligoadenylate synthetase gene family: evidence for concerted evolution of paralogous Oas1 genes in Rodentia and Artiodactyla.</title>
        <authorList>
            <person name="Perelygin A.A."/>
            <person name="Zharkikh A.A."/>
            <person name="Scherbik S.V."/>
            <person name="Brinton M.A."/>
        </authorList>
    </citation>
    <scope>REVIEW</scope>
</reference>
<reference key="6">
    <citation type="journal article" date="2005" name="Biochemistry">
        <title>Natural mutations in a 2'-5' oligoadenylate synthetase transgene revealed residues essential for enzyme activity.</title>
        <authorList>
            <person name="Sarkar S.N."/>
            <person name="Kessler S.P."/>
            <person name="Rowe T.M."/>
            <person name="Pandey M."/>
            <person name="Ghosh A."/>
            <person name="Elco C.P."/>
            <person name="Hartmann R."/>
            <person name="Pal S."/>
            <person name="Sen G.C."/>
        </authorList>
    </citation>
    <scope>FUNCTION</scope>
    <scope>CATALYTIC ACTIVITY</scope>
    <scope>BIOPHYSICOCHEMICAL PROPERTIES</scope>
    <scope>MUTAGENESIS OF LYS-444; SER-509 AND PRO-538</scope>
</reference>
<reference key="7">
    <citation type="journal article" date="2011" name="J. Interferon Cytokine Res.">
        <title>The oligoadenylate synthetase family: an ancient protein family with multiple antiviral activities.</title>
        <authorList>
            <person name="Kristiansen H."/>
            <person name="Gad H.H."/>
            <person name="Eskildsen-Larsen S."/>
            <person name="Despres P."/>
            <person name="Hartmann R."/>
        </authorList>
    </citation>
    <scope>REVIEW ON FUNCTION</scope>
</reference>
<reference key="8">
    <citation type="journal article" date="2017" name="PLoS Genet.">
        <title>A mutation in the viral sensor 2'-5'-oligoadenylate synthetase 2 causes failure of lactation.</title>
        <authorList>
            <person name="Oakes S.R."/>
            <person name="Gallego-Ortega D."/>
            <person name="Stanford P.M."/>
            <person name="Junankar S."/>
            <person name="Au W.W.Y."/>
            <person name="Kikhtyak Z."/>
            <person name="von Korff A."/>
            <person name="Sergio C.M."/>
            <person name="Law A.M.K."/>
            <person name="Castillo L.E."/>
            <person name="Allerdice S.L."/>
            <person name="Young A.I.J."/>
            <person name="Piggin C."/>
            <person name="Whittle B."/>
            <person name="Bertram E."/>
            <person name="Naylor M.J."/>
            <person name="Roden D.L."/>
            <person name="Donovan J."/>
            <person name="Korennykh A."/>
            <person name="Goodnow C.C."/>
            <person name="O'Bryan M.K."/>
            <person name="Ormandy C.J."/>
        </authorList>
    </citation>
    <scope>FUNCTION</scope>
    <scope>CATALYTIC ACTIVITY</scope>
    <scope>ACTIVITY REGULATION</scope>
    <scope>TISSUE SPECIFICITY</scope>
    <scope>MUTAGENESIS OF ILE-405</scope>
</reference>
<organism>
    <name type="scientific">Mus musculus</name>
    <name type="common">Mouse</name>
    <dbReference type="NCBI Taxonomy" id="10090"/>
    <lineage>
        <taxon>Eukaryota</taxon>
        <taxon>Metazoa</taxon>
        <taxon>Chordata</taxon>
        <taxon>Craniata</taxon>
        <taxon>Vertebrata</taxon>
        <taxon>Euteleostomi</taxon>
        <taxon>Mammalia</taxon>
        <taxon>Eutheria</taxon>
        <taxon>Euarchontoglires</taxon>
        <taxon>Glires</taxon>
        <taxon>Rodentia</taxon>
        <taxon>Myomorpha</taxon>
        <taxon>Muroidea</taxon>
        <taxon>Muridae</taxon>
        <taxon>Murinae</taxon>
        <taxon>Mus</taxon>
        <taxon>Mus</taxon>
    </lineage>
</organism>
<gene>
    <name evidence="14" type="primary">Oas2</name>
    <name evidence="11" type="synonym">oasl11</name>
</gene>
<comment type="function">
    <text evidence="6 7 8 12">Interferon-induced, dsRNA-activated antiviral enzyme which plays a critical role in cellular innate antiviral response (PubMed:12396720, PubMed:29117179). Activated by detection of double stranded RNA (dsRNA): polymerizes higher oligomers of 2'-5'-oligoadenylates (2-5A) from ATP which then bind to the inactive monomeric form of ribonuclease L (RNASEL) leading to its dimerization and subsequent activation (PubMed:29117179). Activation of RNASEL leads to degradation of cellular as well as viral RNA, resulting in the inhibition of protein synthesis, thus terminating viral replication (PubMed:21142819). Can mediate the antiviral effect via the classical RNASEL-dependent pathway or an alternative antiviral pathway independent of RNASEL (PubMed:21142819). In addition, it may also play a role in other cellular processes such as apoptosis, cell growth, differentiation and gene regulation (PubMed:21142819). May act as a negative regulator of lactation, stopping lactation in virally infected mammary gland lobules, thereby preventing transmission of viruses to neonates (PubMed:29117179). Non-infected lobules would not be affected, allowing efficient pup feeding during infection (PubMed:29117179).</text>
</comment>
<comment type="catalytic activity">
    <reaction evidence="7 8">
        <text>3 ATP = 5'-triphosphoadenylyl-(2'-&gt;5')-adenylyl-(2'-&gt;5')-adenosine + 2 diphosphate</text>
        <dbReference type="Rhea" id="RHEA:34407"/>
        <dbReference type="ChEBI" id="CHEBI:30616"/>
        <dbReference type="ChEBI" id="CHEBI:33019"/>
        <dbReference type="ChEBI" id="CHEBI:67143"/>
        <dbReference type="EC" id="2.7.7.84"/>
    </reaction>
</comment>
<comment type="cofactor">
    <cofactor evidence="2">
        <name>Mg(2+)</name>
        <dbReference type="ChEBI" id="CHEBI:18420"/>
    </cofactor>
</comment>
<comment type="activity regulation">
    <text evidence="2 8">Produced as a latent enzyme which is activated by double stranded RNA (dsRNA) generated during the course of viral infection (PubMed:29117179). The dsRNA activator must be at least 15 nucleotides long, and no modification of the 2'-hydroxyl group is tolerated (By similarity). ssRNA or dsDNA do not act as activators (By similarity). Strongly inhibited by copper, iron and zinc ions (By similarity). Partially inhibited by cobalt and nickel ions (By similarity).</text>
</comment>
<comment type="biophysicochemical properties">
    <kinetics>
        <KM evidence="7">1.9 mM for ATP</KM>
        <text evidence="7">kcat is 6.4 sec(-1) for ATP.</text>
    </kinetics>
</comment>
<comment type="subunit">
    <text evidence="2">Homodimer.</text>
</comment>
<comment type="subcellular location">
    <subcellularLocation>
        <location evidence="2">Cytoplasm</location>
    </subcellularLocation>
    <subcellularLocation>
        <location evidence="2">Cytoplasm</location>
        <location evidence="2">Perinuclear region</location>
    </subcellularLocation>
</comment>
<comment type="alternative products">
    <event type="alternative splicing"/>
    <isoform>
        <id>E9Q9A9-1</id>
        <name>1</name>
        <sequence type="displayed"/>
    </isoform>
    <isoform>
        <id>E9Q9A9-2</id>
        <name>2</name>
        <sequence type="described" ref="VSP_044068"/>
    </isoform>
</comment>
<comment type="tissue specificity">
    <text evidence="6 8">Expressed in the uterus (PubMed:12396720). Expressed in mammary glands: expressed at low level before the establishment of lactation, then expression strongly increases, and subsequently decreases during early involution (PubMed:29117179).</text>
</comment>
<comment type="PTM">
    <text evidence="2">Myristoylation is not essential for its activity.</text>
</comment>
<comment type="PTM">
    <text evidence="2">Glycosylated. Glycosylation is essential for its activity.</text>
</comment>
<comment type="similarity">
    <text evidence="13">Belongs to the 2-5A synthase family.</text>
</comment>
<keyword id="KW-0007">Acetylation</keyword>
<keyword id="KW-0025">Alternative splicing</keyword>
<keyword id="KW-0051">Antiviral defense</keyword>
<keyword id="KW-0067">ATP-binding</keyword>
<keyword id="KW-0963">Cytoplasm</keyword>
<keyword id="KW-0325">Glycoprotein</keyword>
<keyword id="KW-0391">Immunity</keyword>
<keyword id="KW-0399">Innate immunity</keyword>
<keyword id="KW-0449">Lipoprotein</keyword>
<keyword id="KW-0460">Magnesium</keyword>
<keyword id="KW-0479">Metal-binding</keyword>
<keyword id="KW-0519">Myristate</keyword>
<keyword id="KW-0547">Nucleotide-binding</keyword>
<keyword id="KW-0548">Nucleotidyltransferase</keyword>
<keyword id="KW-1185">Reference proteome</keyword>
<keyword id="KW-0677">Repeat</keyword>
<keyword id="KW-0694">RNA-binding</keyword>
<keyword id="KW-0808">Transferase</keyword>
<accession>E9Q9A9</accession>
<accession>Q8K4E5</accession>
<accession>Q8VI92</accession>
<proteinExistence type="evidence at protein level"/>
<dbReference type="EC" id="2.7.7.84" evidence="7 8"/>
<dbReference type="EMBL" id="AB067535">
    <property type="protein sequence ID" value="BAB84135.1"/>
    <property type="molecule type" value="mRNA"/>
</dbReference>
<dbReference type="EMBL" id="AF418010">
    <property type="protein sequence ID" value="AAM54499.1"/>
    <property type="molecule type" value="mRNA"/>
</dbReference>
<dbReference type="EMBL" id="AC115937">
    <property type="status" value="NOT_ANNOTATED_CDS"/>
    <property type="molecule type" value="Genomic_DNA"/>
</dbReference>
<dbReference type="EMBL" id="CH466529">
    <property type="protein sequence ID" value="EDL19753.1"/>
    <property type="molecule type" value="Genomic_DNA"/>
</dbReference>
<dbReference type="CCDS" id="CCDS19625.2">
    <molecule id="E9Q9A9-1"/>
</dbReference>
<dbReference type="CCDS" id="CCDS84949.1">
    <molecule id="E9Q9A9-2"/>
</dbReference>
<dbReference type="RefSeq" id="NP_001334377.1">
    <molecule id="E9Q9A9-2"/>
    <property type="nucleotide sequence ID" value="NM_001347448.1"/>
</dbReference>
<dbReference type="RefSeq" id="NP_660262.2">
    <molecule id="E9Q9A9-1"/>
    <property type="nucleotide sequence ID" value="NM_145227.3"/>
</dbReference>
<dbReference type="SMR" id="E9Q9A9"/>
<dbReference type="BioGRID" id="232936">
    <property type="interactions" value="11"/>
</dbReference>
<dbReference type="FunCoup" id="E9Q9A9">
    <property type="interactions" value="392"/>
</dbReference>
<dbReference type="STRING" id="10090.ENSMUSP00000080209"/>
<dbReference type="GlyGen" id="E9Q9A9">
    <property type="glycosylation" value="1 site"/>
</dbReference>
<dbReference type="iPTMnet" id="E9Q9A9"/>
<dbReference type="PhosphoSitePlus" id="E9Q9A9"/>
<dbReference type="SwissPalm" id="E9Q9A9"/>
<dbReference type="jPOST" id="E9Q9A9"/>
<dbReference type="PaxDb" id="10090-ENSMUSP00000060082"/>
<dbReference type="PeptideAtlas" id="E9Q9A9"/>
<dbReference type="ProteomicsDB" id="289956">
    <molecule id="E9Q9A9-1"/>
</dbReference>
<dbReference type="ProteomicsDB" id="289957">
    <molecule id="E9Q9A9-2"/>
</dbReference>
<dbReference type="Antibodypedia" id="31214">
    <property type="antibodies" value="449 antibodies from 31 providers"/>
</dbReference>
<dbReference type="DNASU" id="246728"/>
<dbReference type="Ensembl" id="ENSMUST00000053909.13">
    <molecule id="E9Q9A9-1"/>
    <property type="protein sequence ID" value="ENSMUSP00000060082.7"/>
    <property type="gene ID" value="ENSMUSG00000032690.17"/>
</dbReference>
<dbReference type="Ensembl" id="ENSMUST00000081491.13">
    <molecule id="E9Q9A9-2"/>
    <property type="protein sequence ID" value="ENSMUSP00000080209.7"/>
    <property type="gene ID" value="ENSMUSG00000032690.17"/>
</dbReference>
<dbReference type="GeneID" id="246728"/>
<dbReference type="KEGG" id="mmu:246728"/>
<dbReference type="UCSC" id="uc008zhw.2">
    <molecule id="E9Q9A9-2"/>
    <property type="organism name" value="mouse"/>
</dbReference>
<dbReference type="UCSC" id="uc008zhx.2">
    <molecule id="E9Q9A9-1"/>
    <property type="organism name" value="mouse"/>
</dbReference>
<dbReference type="AGR" id="MGI:2180852"/>
<dbReference type="CTD" id="4939"/>
<dbReference type="MGI" id="MGI:2180852">
    <property type="gene designation" value="Oas2"/>
</dbReference>
<dbReference type="VEuPathDB" id="HostDB:ENSMUSG00000032690"/>
<dbReference type="eggNOG" id="ENOG502S649">
    <property type="taxonomic scope" value="Eukaryota"/>
</dbReference>
<dbReference type="GeneTree" id="ENSGT00510000046406"/>
<dbReference type="HOGENOM" id="CLU_026275_0_0_1"/>
<dbReference type="InParanoid" id="E9Q9A9"/>
<dbReference type="OMA" id="KQCERKM"/>
<dbReference type="OrthoDB" id="54165at9989"/>
<dbReference type="TreeFam" id="TF329749"/>
<dbReference type="BioGRID-ORCS" id="246728">
    <property type="hits" value="3 hits in 79 CRISPR screens"/>
</dbReference>
<dbReference type="ChiTaRS" id="Oas2">
    <property type="organism name" value="mouse"/>
</dbReference>
<dbReference type="PRO" id="PR:E9Q9A9"/>
<dbReference type="Proteomes" id="UP000000589">
    <property type="component" value="Chromosome 5"/>
</dbReference>
<dbReference type="RNAct" id="E9Q9A9">
    <property type="molecule type" value="protein"/>
</dbReference>
<dbReference type="Bgee" id="ENSMUSG00000032690">
    <property type="expression patterns" value="Expressed in mucous cell of stomach and 95 other cell types or tissues"/>
</dbReference>
<dbReference type="ExpressionAtlas" id="E9Q9A9">
    <property type="expression patterns" value="baseline and differential"/>
</dbReference>
<dbReference type="GO" id="GO:0048471">
    <property type="term" value="C:perinuclear region of cytoplasm"/>
    <property type="evidence" value="ECO:0000250"/>
    <property type="project" value="UniProtKB"/>
</dbReference>
<dbReference type="GO" id="GO:0001730">
    <property type="term" value="F:2'-5'-oligoadenylate synthetase activity"/>
    <property type="evidence" value="ECO:0000314"/>
    <property type="project" value="UniProtKB"/>
</dbReference>
<dbReference type="GO" id="GO:0005524">
    <property type="term" value="F:ATP binding"/>
    <property type="evidence" value="ECO:0000250"/>
    <property type="project" value="UniProtKB"/>
</dbReference>
<dbReference type="GO" id="GO:0003725">
    <property type="term" value="F:double-stranded RNA binding"/>
    <property type="evidence" value="ECO:0000314"/>
    <property type="project" value="MGI"/>
</dbReference>
<dbReference type="GO" id="GO:0046872">
    <property type="term" value="F:metal ion binding"/>
    <property type="evidence" value="ECO:0007669"/>
    <property type="project" value="UniProtKB-KW"/>
</dbReference>
<dbReference type="GO" id="GO:0042742">
    <property type="term" value="P:defense response to bacterium"/>
    <property type="evidence" value="ECO:0007669"/>
    <property type="project" value="Ensembl"/>
</dbReference>
<dbReference type="GO" id="GO:0051607">
    <property type="term" value="P:defense response to virus"/>
    <property type="evidence" value="ECO:0000314"/>
    <property type="project" value="UniProtKB"/>
</dbReference>
<dbReference type="GO" id="GO:0070106">
    <property type="term" value="P:interleukin-27-mediated signaling pathway"/>
    <property type="evidence" value="ECO:0000270"/>
    <property type="project" value="ARUK-UCL"/>
</dbReference>
<dbReference type="GO" id="GO:0032728">
    <property type="term" value="P:positive regulation of interferon-beta production"/>
    <property type="evidence" value="ECO:0007669"/>
    <property type="project" value="Ensembl"/>
</dbReference>
<dbReference type="GO" id="GO:0032760">
    <property type="term" value="P:positive regulation of tumor necrosis factor production"/>
    <property type="evidence" value="ECO:0007669"/>
    <property type="project" value="Ensembl"/>
</dbReference>
<dbReference type="GO" id="GO:1903487">
    <property type="term" value="P:regulation of lactation"/>
    <property type="evidence" value="ECO:0000315"/>
    <property type="project" value="UniProtKB"/>
</dbReference>
<dbReference type="GO" id="GO:0009617">
    <property type="term" value="P:response to bacterium"/>
    <property type="evidence" value="ECO:0000270"/>
    <property type="project" value="MGI"/>
</dbReference>
<dbReference type="GO" id="GO:0009615">
    <property type="term" value="P:response to virus"/>
    <property type="evidence" value="ECO:0000304"/>
    <property type="project" value="UniProtKB"/>
</dbReference>
<dbReference type="GO" id="GO:0006401">
    <property type="term" value="P:RNA catabolic process"/>
    <property type="evidence" value="ECO:0000314"/>
    <property type="project" value="MGI"/>
</dbReference>
<dbReference type="GO" id="GO:0060337">
    <property type="term" value="P:type I interferon-mediated signaling pathway"/>
    <property type="evidence" value="ECO:0000314"/>
    <property type="project" value="UniProtKB"/>
</dbReference>
<dbReference type="CDD" id="cd05400">
    <property type="entry name" value="NT_2-5OAS_ClassI-CCAase"/>
    <property type="match status" value="2"/>
</dbReference>
<dbReference type="FunFam" id="1.10.1410.20:FF:000001">
    <property type="entry name" value="2'-5'-oligoadenylate synthetase 1"/>
    <property type="match status" value="2"/>
</dbReference>
<dbReference type="FunFam" id="3.30.460.10:FF:000007">
    <property type="entry name" value="2'-5'-oligoadenylate synthetase 1"/>
    <property type="match status" value="2"/>
</dbReference>
<dbReference type="Gene3D" id="1.10.1410.20">
    <property type="entry name" value="2'-5'-oligoadenylate synthetase 1, domain 2"/>
    <property type="match status" value="2"/>
</dbReference>
<dbReference type="Gene3D" id="3.30.460.10">
    <property type="entry name" value="Beta Polymerase, domain 2"/>
    <property type="match status" value="2"/>
</dbReference>
<dbReference type="InterPro" id="IPR018952">
    <property type="entry name" value="2-5-oligoAdlate_synth_1_dom2/C"/>
</dbReference>
<dbReference type="InterPro" id="IPR006117">
    <property type="entry name" value="2-5OAS_C_CS"/>
</dbReference>
<dbReference type="InterPro" id="IPR043518">
    <property type="entry name" value="2-5OAS_N_CS"/>
</dbReference>
<dbReference type="InterPro" id="IPR006116">
    <property type="entry name" value="NT_2-5OAS_ClassI-CCAase"/>
</dbReference>
<dbReference type="InterPro" id="IPR043519">
    <property type="entry name" value="NT_sf"/>
</dbReference>
<dbReference type="InterPro" id="IPR002934">
    <property type="entry name" value="Polymerase_NTP_transf_dom"/>
</dbReference>
<dbReference type="PANTHER" id="PTHR11258:SF3">
    <property type="entry name" value="2'-5'-OLIGOADENYLATE SYNTHASE 2"/>
    <property type="match status" value="1"/>
</dbReference>
<dbReference type="PANTHER" id="PTHR11258">
    <property type="entry name" value="2-5 OLIGOADENYLATE SYNTHETASE"/>
    <property type="match status" value="1"/>
</dbReference>
<dbReference type="Pfam" id="PF01909">
    <property type="entry name" value="NTP_transf_2"/>
    <property type="match status" value="1"/>
</dbReference>
<dbReference type="Pfam" id="PF10421">
    <property type="entry name" value="OAS1_C"/>
    <property type="match status" value="2"/>
</dbReference>
<dbReference type="Pfam" id="PF18144">
    <property type="entry name" value="SMODS"/>
    <property type="match status" value="1"/>
</dbReference>
<dbReference type="SUPFAM" id="SSF81301">
    <property type="entry name" value="Nucleotidyltransferase"/>
    <property type="match status" value="2"/>
</dbReference>
<dbReference type="SUPFAM" id="SSF81631">
    <property type="entry name" value="PAP/OAS1 substrate-binding domain"/>
    <property type="match status" value="2"/>
</dbReference>
<dbReference type="PROSITE" id="PS00832">
    <property type="entry name" value="25A_SYNTH_1"/>
    <property type="match status" value="1"/>
</dbReference>
<dbReference type="PROSITE" id="PS00833">
    <property type="entry name" value="25A_SYNTH_2"/>
    <property type="match status" value="2"/>
</dbReference>
<dbReference type="PROSITE" id="PS50152">
    <property type="entry name" value="25A_SYNTH_3"/>
    <property type="match status" value="2"/>
</dbReference>
<sequence length="742" mass="85051">MGNWLTGNWSSDRSSGYSSGWSPGGSSGVPSGPVHKLEKSIQANLTPNENCLKQIAVSSVPSQKLEGYIQENLKPNRESLKQIDQAVDAIWDLLRSQIPVKEVAKGGSYGRETALRGCSDGTLVLFMDCFQQFQDQIKYQDAYLDVIELWLKIHEKKSVKHEHALVVQVSVPGQRILLQLLPVFNPLRSNENPSSCVYVDLKKSMDQVRASPGEFSDCFTTLQQRFFKKYPQRLKDLILLVKHWYEQCQEKWKTPPPQPLLYALELLTVYAWEQGCQAEDFDMAQGVRTVLRLIQRPTELCVYWTVNYNFEDETVRNILLHQLRSQRPVILDPTDPTNNVGKDDGFWELLTEEAMAWLYSPSLNTESPAPYWDVLPMPLFVTPSHLLNKFIKDFLQPNKLFLKQIKEAVDIICSFLKNVCFLNSDTKVLKTVKGGSTAKGTALKRGSDADIVVFLSSLESYDSLKTNRSQFVQEIQKQLEEFVQAQEWEVTFEISKWKAPRVLSFTLKSKTLNESVEFDVLPAYDALGQLRSDFTLRPEAYKDLIELCASQDIKEGEFSICFTELQRNFIQTRPTKLKSLLRLIKHWYKQYERKMKPKASLPPKYALELLTVYAWEQGSGTDDFDIAEGFRTVLDLVIKYRQLCIFWTVNYNFEEEYMRKFLLTQIQKKRPVILDPADPTGDVGGGDRWCWHLLAEEAKEWLSSPCFQVEQKGLVQPWKVPVMQTPGSCGGQIYPTVGGVTK</sequence>
<evidence type="ECO:0000250" key="1">
    <source>
        <dbReference type="UniProtKB" id="P00973"/>
    </source>
</evidence>
<evidence type="ECO:0000250" key="2">
    <source>
        <dbReference type="UniProtKB" id="P29728"/>
    </source>
</evidence>
<evidence type="ECO:0000255" key="3"/>
<evidence type="ECO:0000256" key="4">
    <source>
        <dbReference type="SAM" id="MobiDB-lite"/>
    </source>
</evidence>
<evidence type="ECO:0000269" key="5">
    <source>
    </source>
</evidence>
<evidence type="ECO:0000269" key="6">
    <source>
    </source>
</evidence>
<evidence type="ECO:0000269" key="7">
    <source>
    </source>
</evidence>
<evidence type="ECO:0000269" key="8">
    <source>
    </source>
</evidence>
<evidence type="ECO:0000269" key="9">
    <source ref="4"/>
</evidence>
<evidence type="ECO:0000303" key="10">
    <source>
    </source>
</evidence>
<evidence type="ECO:0000303" key="11">
    <source>
    </source>
</evidence>
<evidence type="ECO:0000303" key="12">
    <source>
    </source>
</evidence>
<evidence type="ECO:0000305" key="13"/>
<evidence type="ECO:0000312" key="14">
    <source>
        <dbReference type="MGI" id="MGI:2180852"/>
    </source>
</evidence>
<protein>
    <recommendedName>
        <fullName>2'-5'-oligoadenylate synthase 2</fullName>
        <shortName>(2-5')oligo(A) synthase 2</shortName>
        <shortName>2-5A synthase 2</shortName>
        <ecNumber evidence="7 8">2.7.7.84</ecNumber>
    </recommendedName>
    <alternativeName>
        <fullName evidence="11">2',5'-oligoadenylate synthetase-like 11</fullName>
    </alternativeName>
</protein>